<accession>Q9H207</accession>
<accession>O95223</accession>
<accession>Q52M66</accession>
<accession>Q96R21</accession>
<accession>Q96R22</accession>
<feature type="chain" id="PRO_0000150687" description="Olfactory receptor 10A5">
    <location>
        <begin position="1"/>
        <end position="317"/>
    </location>
</feature>
<feature type="topological domain" description="Extracellular" evidence="1">
    <location>
        <begin position="1"/>
        <end position="26"/>
    </location>
</feature>
<feature type="transmembrane region" description="Helical; Name=1" evidence="1">
    <location>
        <begin position="27"/>
        <end position="47"/>
    </location>
</feature>
<feature type="topological domain" description="Cytoplasmic" evidence="1">
    <location>
        <begin position="48"/>
        <end position="55"/>
    </location>
</feature>
<feature type="transmembrane region" description="Helical; Name=2" evidence="1">
    <location>
        <begin position="56"/>
        <end position="76"/>
    </location>
</feature>
<feature type="topological domain" description="Extracellular" evidence="1">
    <location>
        <begin position="77"/>
        <end position="100"/>
    </location>
</feature>
<feature type="transmembrane region" description="Helical; Name=3" evidence="1">
    <location>
        <begin position="101"/>
        <end position="121"/>
    </location>
</feature>
<feature type="topological domain" description="Cytoplasmic" evidence="1">
    <location>
        <begin position="122"/>
        <end position="140"/>
    </location>
</feature>
<feature type="transmembrane region" description="Helical; Name=4" evidence="1">
    <location>
        <begin position="141"/>
        <end position="161"/>
    </location>
</feature>
<feature type="topological domain" description="Extracellular" evidence="1">
    <location>
        <begin position="162"/>
        <end position="198"/>
    </location>
</feature>
<feature type="transmembrane region" description="Helical; Name=5" evidence="1">
    <location>
        <begin position="199"/>
        <end position="218"/>
    </location>
</feature>
<feature type="topological domain" description="Cytoplasmic" evidence="1">
    <location>
        <begin position="219"/>
        <end position="238"/>
    </location>
</feature>
<feature type="transmembrane region" description="Helical; Name=6" evidence="1">
    <location>
        <begin position="239"/>
        <end position="259"/>
    </location>
</feature>
<feature type="topological domain" description="Extracellular" evidence="1">
    <location>
        <begin position="260"/>
        <end position="272"/>
    </location>
</feature>
<feature type="transmembrane region" description="Helical; Name=7" evidence="1">
    <location>
        <begin position="273"/>
        <end position="293"/>
    </location>
</feature>
<feature type="topological domain" description="Cytoplasmic" evidence="1">
    <location>
        <begin position="294"/>
        <end position="317"/>
    </location>
</feature>
<feature type="glycosylation site" description="N-linked (GlcNAc...) asparagine" evidence="1">
    <location>
        <position position="5"/>
    </location>
</feature>
<feature type="disulfide bond" evidence="2">
    <location>
        <begin position="98"/>
        <end position="190"/>
    </location>
</feature>
<feature type="sequence variant" id="VAR_034282" description="In dbSNP:rs7949377.">
    <original>K</original>
    <variation>M</variation>
    <location>
        <position position="41"/>
    </location>
</feature>
<feature type="sequence conflict" description="In Ref. 4; AAC70019." evidence="3" ref="4">
    <original>S</original>
    <variation>L</variation>
    <location>
        <position position="256"/>
    </location>
</feature>
<feature type="sequence conflict" description="In Ref. 4; AAC70019." evidence="3" ref="4">
    <original>W</original>
    <variation>R</variation>
    <location>
        <position position="262"/>
    </location>
</feature>
<feature type="sequence conflict" description="In Ref. 4; AAC70019." evidence="3" ref="4">
    <original>S</original>
    <variation>G</variation>
    <location>
        <position position="271"/>
    </location>
</feature>
<feature type="sequence conflict" description="In Ref. 4; AAC70019." evidence="3" ref="4">
    <original>V</original>
    <variation>M</variation>
    <location>
        <position position="282"/>
    </location>
</feature>
<dbReference type="EMBL" id="AF324499">
    <property type="protein sequence ID" value="AAL33005.1"/>
    <property type="molecule type" value="mRNA"/>
</dbReference>
<dbReference type="EMBL" id="AF321237">
    <property type="protein sequence ID" value="AAG45206.1"/>
    <property type="molecule type" value="Genomic_DNA"/>
</dbReference>
<dbReference type="EMBL" id="BC093651">
    <property type="protein sequence ID" value="AAH93651.1"/>
    <property type="molecule type" value="mRNA"/>
</dbReference>
<dbReference type="EMBL" id="BC093653">
    <property type="protein sequence ID" value="AAH93653.1"/>
    <property type="molecule type" value="mRNA"/>
</dbReference>
<dbReference type="EMBL" id="AF065874">
    <property type="protein sequence ID" value="AAC70019.1"/>
    <property type="molecule type" value="Genomic_DNA"/>
</dbReference>
<dbReference type="EMBL" id="AF399623">
    <property type="protein sequence ID" value="AAK95108.1"/>
    <property type="molecule type" value="Genomic_DNA"/>
</dbReference>
<dbReference type="CCDS" id="CCDS7773.1"/>
<dbReference type="RefSeq" id="NP_835462.1">
    <property type="nucleotide sequence ID" value="NM_178168.1"/>
</dbReference>
<dbReference type="SMR" id="Q9H207"/>
<dbReference type="BioGRID" id="126832">
    <property type="interactions" value="1"/>
</dbReference>
<dbReference type="FunCoup" id="Q9H207">
    <property type="interactions" value="465"/>
</dbReference>
<dbReference type="STRING" id="9606.ENSP00000299454"/>
<dbReference type="GlyCosmos" id="Q9H207">
    <property type="glycosylation" value="1 site, No reported glycans"/>
</dbReference>
<dbReference type="GlyGen" id="Q9H207">
    <property type="glycosylation" value="1 site"/>
</dbReference>
<dbReference type="iPTMnet" id="Q9H207"/>
<dbReference type="PhosphoSitePlus" id="Q9H207"/>
<dbReference type="BioMuta" id="OR10A5"/>
<dbReference type="DMDM" id="14423805"/>
<dbReference type="MassIVE" id="Q9H207"/>
<dbReference type="PaxDb" id="9606-ENSP00000299454"/>
<dbReference type="ProteomicsDB" id="80467"/>
<dbReference type="TopDownProteomics" id="Q9H207"/>
<dbReference type="Antibodypedia" id="56597">
    <property type="antibodies" value="45 antibodies from 14 providers"/>
</dbReference>
<dbReference type="DNASU" id="144124"/>
<dbReference type="Ensembl" id="ENST00000299454.5">
    <property type="protein sequence ID" value="ENSP00000299454.4"/>
    <property type="gene ID" value="ENSG00000166363.6"/>
</dbReference>
<dbReference type="GeneID" id="144124"/>
<dbReference type="KEGG" id="hsa:144124"/>
<dbReference type="MANE-Select" id="ENST00000299454.5">
    <property type="protein sequence ID" value="ENSP00000299454.4"/>
    <property type="RefSeq nucleotide sequence ID" value="NM_178168.1"/>
    <property type="RefSeq protein sequence ID" value="NP_835462.1"/>
</dbReference>
<dbReference type="UCSC" id="uc001met.2">
    <property type="organism name" value="human"/>
</dbReference>
<dbReference type="AGR" id="HGNC:15131"/>
<dbReference type="CTD" id="144124"/>
<dbReference type="GeneCards" id="OR10A5"/>
<dbReference type="HGNC" id="HGNC:15131">
    <property type="gene designation" value="OR10A5"/>
</dbReference>
<dbReference type="HPA" id="ENSG00000166363">
    <property type="expression patterns" value="Not detected"/>
</dbReference>
<dbReference type="MIM" id="608493">
    <property type="type" value="gene"/>
</dbReference>
<dbReference type="neXtProt" id="NX_Q9H207"/>
<dbReference type="OpenTargets" id="ENSG00000166363"/>
<dbReference type="PharmGKB" id="PA31953"/>
<dbReference type="VEuPathDB" id="HostDB:ENSG00000166363"/>
<dbReference type="eggNOG" id="ENOG502QVH7">
    <property type="taxonomic scope" value="Eukaryota"/>
</dbReference>
<dbReference type="GeneTree" id="ENSGT01120000271813"/>
<dbReference type="HOGENOM" id="CLU_012526_1_0_1"/>
<dbReference type="InParanoid" id="Q9H207"/>
<dbReference type="OMA" id="WTEISEF"/>
<dbReference type="OrthoDB" id="9975554at2759"/>
<dbReference type="PAN-GO" id="Q9H207">
    <property type="GO annotations" value="1 GO annotation based on evolutionary models"/>
</dbReference>
<dbReference type="PhylomeDB" id="Q9H207"/>
<dbReference type="TreeFam" id="TF337350"/>
<dbReference type="PathwayCommons" id="Q9H207"/>
<dbReference type="Reactome" id="R-HSA-9752946">
    <property type="pathway name" value="Expression and translocation of olfactory receptors"/>
</dbReference>
<dbReference type="BioGRID-ORCS" id="144124">
    <property type="hits" value="6 hits in 693 CRISPR screens"/>
</dbReference>
<dbReference type="GeneWiki" id="OR10A5"/>
<dbReference type="GenomeRNAi" id="144124"/>
<dbReference type="Pharos" id="Q9H207">
    <property type="development level" value="Tdark"/>
</dbReference>
<dbReference type="PRO" id="PR:Q9H207"/>
<dbReference type="Proteomes" id="UP000005640">
    <property type="component" value="Chromosome 11"/>
</dbReference>
<dbReference type="RNAct" id="Q9H207">
    <property type="molecule type" value="protein"/>
</dbReference>
<dbReference type="Bgee" id="ENSG00000166363">
    <property type="expression patterns" value="Expressed in male germ line stem cell (sensu Vertebrata) in testis and 1 other cell type or tissue"/>
</dbReference>
<dbReference type="ExpressionAtlas" id="Q9H207">
    <property type="expression patterns" value="baseline and differential"/>
</dbReference>
<dbReference type="GO" id="GO:0016020">
    <property type="term" value="C:membrane"/>
    <property type="evidence" value="ECO:0000303"/>
    <property type="project" value="UniProtKB"/>
</dbReference>
<dbReference type="GO" id="GO:0005886">
    <property type="term" value="C:plasma membrane"/>
    <property type="evidence" value="ECO:0000318"/>
    <property type="project" value="GO_Central"/>
</dbReference>
<dbReference type="GO" id="GO:0004930">
    <property type="term" value="F:G protein-coupled receptor activity"/>
    <property type="evidence" value="ECO:0007669"/>
    <property type="project" value="UniProtKB-KW"/>
</dbReference>
<dbReference type="GO" id="GO:0004984">
    <property type="term" value="F:olfactory receptor activity"/>
    <property type="evidence" value="ECO:0000318"/>
    <property type="project" value="GO_Central"/>
</dbReference>
<dbReference type="GO" id="GO:0050911">
    <property type="term" value="P:detection of chemical stimulus involved in sensory perception of smell"/>
    <property type="evidence" value="ECO:0000318"/>
    <property type="project" value="GO_Central"/>
</dbReference>
<dbReference type="GO" id="GO:0007608">
    <property type="term" value="P:sensory perception of smell"/>
    <property type="evidence" value="ECO:0000303"/>
    <property type="project" value="UniProtKB"/>
</dbReference>
<dbReference type="CDD" id="cd15225">
    <property type="entry name" value="7tmA_OR10A-like"/>
    <property type="match status" value="1"/>
</dbReference>
<dbReference type="FunFam" id="1.20.1070.10:FF:000001">
    <property type="entry name" value="Olfactory receptor"/>
    <property type="match status" value="1"/>
</dbReference>
<dbReference type="Gene3D" id="1.20.1070.10">
    <property type="entry name" value="Rhodopsin 7-helix transmembrane proteins"/>
    <property type="match status" value="1"/>
</dbReference>
<dbReference type="InterPro" id="IPR000276">
    <property type="entry name" value="GPCR_Rhodpsn"/>
</dbReference>
<dbReference type="InterPro" id="IPR017452">
    <property type="entry name" value="GPCR_Rhodpsn_7TM"/>
</dbReference>
<dbReference type="InterPro" id="IPR000725">
    <property type="entry name" value="Olfact_rcpt"/>
</dbReference>
<dbReference type="PANTHER" id="PTHR26453">
    <property type="entry name" value="OLFACTORY RECEPTOR"/>
    <property type="match status" value="1"/>
</dbReference>
<dbReference type="Pfam" id="PF13853">
    <property type="entry name" value="7tm_4"/>
    <property type="match status" value="1"/>
</dbReference>
<dbReference type="PRINTS" id="PR00237">
    <property type="entry name" value="GPCRRHODOPSN"/>
</dbReference>
<dbReference type="PRINTS" id="PR00245">
    <property type="entry name" value="OLFACTORYR"/>
</dbReference>
<dbReference type="SUPFAM" id="SSF81321">
    <property type="entry name" value="Family A G protein-coupled receptor-like"/>
    <property type="match status" value="1"/>
</dbReference>
<dbReference type="PROSITE" id="PS00237">
    <property type="entry name" value="G_PROTEIN_RECEP_F1_1"/>
    <property type="match status" value="1"/>
</dbReference>
<dbReference type="PROSITE" id="PS50262">
    <property type="entry name" value="G_PROTEIN_RECEP_F1_2"/>
    <property type="match status" value="1"/>
</dbReference>
<keyword id="KW-1003">Cell membrane</keyword>
<keyword id="KW-1015">Disulfide bond</keyword>
<keyword id="KW-0297">G-protein coupled receptor</keyword>
<keyword id="KW-0325">Glycoprotein</keyword>
<keyword id="KW-0472">Membrane</keyword>
<keyword id="KW-0552">Olfaction</keyword>
<keyword id="KW-0675">Receptor</keyword>
<keyword id="KW-1185">Reference proteome</keyword>
<keyword id="KW-0716">Sensory transduction</keyword>
<keyword id="KW-0807">Transducer</keyword>
<keyword id="KW-0812">Transmembrane</keyword>
<keyword id="KW-1133">Transmembrane helix</keyword>
<sequence length="317" mass="35519">MAIGNWTEISEFILMSFSSLPTEIQSLLFLTFLTIYLVTLKGNSLIILVTLADPMLHSPMYFFLRNLSFLEIGFNLVIVPKMLGTLLAQDTTISFLGCATQMYFFFFFGVAECFLLATMAYDRYVAICSPLHYPVIMNQRTRAKLAAASWFPGFPVATVQTTWLFSFPFCGTNKVNHFFCDSPPVLKLVCADTALFEIYAIVGTILVVMIPCLLILCSYTRIAAAILKIPSAKGKHKAFSTCSSHLLVVSLFYISSSLTYFWPKSNNSPESKKLLSLSYTVVTPMLNPIIYSLRNSEVKNALSRTFHKVLALRNCIP</sequence>
<proteinExistence type="evidence at transcript level"/>
<name>O10A5_HUMAN</name>
<protein>
    <recommendedName>
        <fullName>Olfactory receptor 10A5</fullName>
    </recommendedName>
    <alternativeName>
        <fullName>HP3</fullName>
    </alternativeName>
    <alternativeName>
        <fullName>Olfactory receptor 10A1</fullName>
    </alternativeName>
    <alternativeName>
        <fullName>Olfactory receptor 11-403</fullName>
        <shortName>OR11-403</shortName>
    </alternativeName>
    <alternativeName>
        <fullName>Olfactory receptor-like protein JCG6</fullName>
    </alternativeName>
</protein>
<gene>
    <name type="primary">OR10A5</name>
    <name type="synonym">OR10A1</name>
</gene>
<reference key="1">
    <citation type="journal article" date="2001" name="Chem. Senses">
        <title>New GPCRs from a human lingual cDNA library.</title>
        <authorList>
            <person name="Gaudin J.-C."/>
            <person name="Breuils L."/>
            <person name="Haertle T."/>
        </authorList>
    </citation>
    <scope>NUCLEOTIDE SEQUENCE [MRNA]</scope>
    <source>
        <tissue>Tongue</tissue>
    </source>
</reference>
<reference key="2">
    <citation type="journal article" date="2001" name="Proc. Natl. Acad. Sci. U.S.A.">
        <title>Genomic analysis of orthologous mouse and human olfactory receptor loci.</title>
        <authorList>
            <person name="Lane R.P."/>
            <person name="Cutforth T."/>
            <person name="Young J."/>
            <person name="Athanasiou M."/>
            <person name="Friedman C."/>
            <person name="Rowen L."/>
            <person name="Evans G."/>
            <person name="Axel R."/>
            <person name="Hood L."/>
            <person name="Trask B.J."/>
        </authorList>
    </citation>
    <scope>NUCLEOTIDE SEQUENCE [GENOMIC DNA]</scope>
</reference>
<reference key="3">
    <citation type="journal article" date="2004" name="Genome Res.">
        <title>The status, quality, and expansion of the NIH full-length cDNA project: the Mammalian Gene Collection (MGC).</title>
        <authorList>
            <consortium name="The MGC Project Team"/>
        </authorList>
    </citation>
    <scope>NUCLEOTIDE SEQUENCE [LARGE SCALE MRNA]</scope>
    <source>
        <tissue>Brain</tissue>
    </source>
</reference>
<reference key="4">
    <citation type="journal article" date="1998" name="Genomics">
        <title>Organization and evolution of olfactory receptor genes on human chromosome 11.</title>
        <authorList>
            <person name="Buettner J.A."/>
            <person name="Glusman G."/>
            <person name="Ben-Arie N."/>
            <person name="Ramos P."/>
            <person name="Lancet D."/>
            <person name="Evans G.A."/>
        </authorList>
    </citation>
    <scope>NUCLEOTIDE SEQUENCE [GENOMIC DNA] OF 68-288</scope>
</reference>
<reference key="5">
    <citation type="journal article" date="2002" name="Genomics">
        <title>DEFOG: a practical scheme for deciphering families of genes.</title>
        <authorList>
            <person name="Fuchs T."/>
            <person name="Malecova B."/>
            <person name="Linhart C."/>
            <person name="Sharan R."/>
            <person name="Khen M."/>
            <person name="Herwig R."/>
            <person name="Shmulevich D."/>
            <person name="Elkon R."/>
            <person name="Steinfath M."/>
            <person name="O'Brien J.K."/>
            <person name="Radelof U."/>
            <person name="Lehrach H."/>
            <person name="Lancet D."/>
            <person name="Shamir R."/>
        </authorList>
    </citation>
    <scope>NUCLEOTIDE SEQUENCE [GENOMIC DNA] OF 69-284</scope>
</reference>
<comment type="function">
    <text evidence="3">Odorant receptor (Potential). May be involved in taste perception.</text>
</comment>
<comment type="subcellular location">
    <subcellularLocation>
        <location>Cell membrane</location>
        <topology>Multi-pass membrane protein</topology>
    </subcellularLocation>
</comment>
<comment type="tissue specificity">
    <text>Expressed in the tongue.</text>
</comment>
<comment type="similarity">
    <text evidence="2">Belongs to the G-protein coupled receptor 1 family.</text>
</comment>
<comment type="online information" name="Human Olfactory Receptor Data Exploratorium (HORDE)">
    <link uri="http://genome.weizmann.ac.il/horde/card/index/symbol:OR10A5"/>
</comment>
<evidence type="ECO:0000255" key="1"/>
<evidence type="ECO:0000255" key="2">
    <source>
        <dbReference type="PROSITE-ProRule" id="PRU00521"/>
    </source>
</evidence>
<evidence type="ECO:0000305" key="3"/>
<organism>
    <name type="scientific">Homo sapiens</name>
    <name type="common">Human</name>
    <dbReference type="NCBI Taxonomy" id="9606"/>
    <lineage>
        <taxon>Eukaryota</taxon>
        <taxon>Metazoa</taxon>
        <taxon>Chordata</taxon>
        <taxon>Craniata</taxon>
        <taxon>Vertebrata</taxon>
        <taxon>Euteleostomi</taxon>
        <taxon>Mammalia</taxon>
        <taxon>Eutheria</taxon>
        <taxon>Euarchontoglires</taxon>
        <taxon>Primates</taxon>
        <taxon>Haplorrhini</taxon>
        <taxon>Catarrhini</taxon>
        <taxon>Hominidae</taxon>
        <taxon>Homo</taxon>
    </lineage>
</organism>